<protein>
    <recommendedName>
        <fullName>Serine hydroxymethyltransferase, mitochondrial</fullName>
        <shortName>SHMT</shortName>
        <ecNumber>2.1.2.1</ecNumber>
    </recommendedName>
    <alternativeName>
        <fullName>Glycine hydroxymethyltransferase</fullName>
    </alternativeName>
    <alternativeName>
        <fullName>Serine methylase</fullName>
    </alternativeName>
</protein>
<organism>
    <name type="scientific">Saccharomyces cerevisiae (strain ATCC 204508 / S288c)</name>
    <name type="common">Baker's yeast</name>
    <dbReference type="NCBI Taxonomy" id="559292"/>
    <lineage>
        <taxon>Eukaryota</taxon>
        <taxon>Fungi</taxon>
        <taxon>Dikarya</taxon>
        <taxon>Ascomycota</taxon>
        <taxon>Saccharomycotina</taxon>
        <taxon>Saccharomycetes</taxon>
        <taxon>Saccharomycetales</taxon>
        <taxon>Saccharomycetaceae</taxon>
        <taxon>Saccharomyces</taxon>
    </lineage>
</organism>
<proteinExistence type="evidence at protein level"/>
<sequence>MFPRASALAKCMATVHRRGLLTSGAQSLVSKPVSEGDPEMFDILQQERHRQKHSITLIPSENFTSKAVMDLLGSELQNKYSEGYPGERYYGGNEIIDKSESLCQARALELYGLDPAKWGVNVQPLSGAPANLYVYSAIMNVGERLMGLDLPDGGHLSHGYQLKSGTPISFISKYFQSMPYHVDHTTGLIDYDNLQVLAKAFRPKVIVAGTSAYSRLIDYARFKEISQGCGAYLMSDMAHISGLVAANVVPSPFEHSDIVTTTTHKSLRGPRGAMIFFRKGIKSVTKKGKEIPYELEKKINFSVFPGHQGGPHNHTIGAMAVALKQAMSPEFKEYQQKIVDNSKWFAQELTKMGYKLVSGGTDNHLIVIDLSGTQVDGARVETILSALNIAANKNTIPGDKSALFPSGLRIGTPAMTTRGFGREEFSQVAKYIDSAVKLAENLKTLEPTTKLDARSRLNEFKKLCNESSEVAALSGEISKWVGQYPVPGDI</sequence>
<reference key="1">
    <citation type="journal article" date="1994" name="J. Biol. Chem.">
        <title>Cloning and molecular characterization of three genes, including two genes encoding serine hydroxymethyltransferases, whose inactivation is required to render yeast auxotrophic for glycine.</title>
        <authorList>
            <person name="McNeil J.B."/>
            <person name="McIntosh E.M."/>
            <person name="Taylor B.V."/>
            <person name="Zhang F.-R."/>
            <person name="Tang S."/>
            <person name="Bognar A.L."/>
        </authorList>
    </citation>
    <scope>NUCLEOTIDE SEQUENCE [GENOMIC DNA]</scope>
    <source>
        <strain>ATCC 208353 / W303-1A</strain>
    </source>
</reference>
<reference key="2">
    <citation type="journal article" date="1993" name="Yeast">
        <title>The complete sequence of a 19,482 bp segment located on the right arm of chromosome II from Saccharomyces cerevisiae.</title>
        <authorList>
            <person name="Doignon F."/>
            <person name="Biteau N."/>
            <person name="Crouzet M."/>
            <person name="Aigle M."/>
        </authorList>
    </citation>
    <scope>NUCLEOTIDE SEQUENCE [GENOMIC DNA]</scope>
    <source>
        <strain>ATCC 204508 / S288c</strain>
    </source>
</reference>
<reference key="3">
    <citation type="journal article" date="1994" name="EMBO J.">
        <title>Complete DNA sequence of yeast chromosome II.</title>
        <authorList>
            <person name="Feldmann H."/>
            <person name="Aigle M."/>
            <person name="Aljinovic G."/>
            <person name="Andre B."/>
            <person name="Baclet M.C."/>
            <person name="Barthe C."/>
            <person name="Baur A."/>
            <person name="Becam A.-M."/>
            <person name="Biteau N."/>
            <person name="Boles E."/>
            <person name="Brandt T."/>
            <person name="Brendel M."/>
            <person name="Brueckner M."/>
            <person name="Bussereau F."/>
            <person name="Christiansen C."/>
            <person name="Contreras R."/>
            <person name="Crouzet M."/>
            <person name="Cziepluch C."/>
            <person name="Demolis N."/>
            <person name="Delaveau T."/>
            <person name="Doignon F."/>
            <person name="Domdey H."/>
            <person name="Duesterhus S."/>
            <person name="Dubois E."/>
            <person name="Dujon B."/>
            <person name="El Bakkoury M."/>
            <person name="Entian K.-D."/>
            <person name="Feuermann M."/>
            <person name="Fiers W."/>
            <person name="Fobo G.M."/>
            <person name="Fritz C."/>
            <person name="Gassenhuber J."/>
            <person name="Glansdorff N."/>
            <person name="Goffeau A."/>
            <person name="Grivell L.A."/>
            <person name="de Haan M."/>
            <person name="Hein C."/>
            <person name="Herbert C.J."/>
            <person name="Hollenberg C.P."/>
            <person name="Holmstroem K."/>
            <person name="Jacq C."/>
            <person name="Jacquet M."/>
            <person name="Jauniaux J.-C."/>
            <person name="Jonniaux J.-L."/>
            <person name="Kallesoee T."/>
            <person name="Kiesau P."/>
            <person name="Kirchrath L."/>
            <person name="Koetter P."/>
            <person name="Korol S."/>
            <person name="Liebl S."/>
            <person name="Logghe M."/>
            <person name="Lohan A.J.E."/>
            <person name="Louis E.J."/>
            <person name="Li Z.Y."/>
            <person name="Maat M.J."/>
            <person name="Mallet L."/>
            <person name="Mannhaupt G."/>
            <person name="Messenguy F."/>
            <person name="Miosga T."/>
            <person name="Molemans F."/>
            <person name="Mueller S."/>
            <person name="Nasr F."/>
            <person name="Obermaier B."/>
            <person name="Perea J."/>
            <person name="Pierard A."/>
            <person name="Piravandi E."/>
            <person name="Pohl F.M."/>
            <person name="Pohl T.M."/>
            <person name="Potier S."/>
            <person name="Proft M."/>
            <person name="Purnelle B."/>
            <person name="Ramezani Rad M."/>
            <person name="Rieger M."/>
            <person name="Rose M."/>
            <person name="Schaaff-Gerstenschlaeger I."/>
            <person name="Scherens B."/>
            <person name="Schwarzlose C."/>
            <person name="Skala J."/>
            <person name="Slonimski P.P."/>
            <person name="Smits P.H.M."/>
            <person name="Souciet J.-L."/>
            <person name="Steensma H.Y."/>
            <person name="Stucka R."/>
            <person name="Urrestarazu L.A."/>
            <person name="van der Aart Q.J.M."/>
            <person name="Van Dyck L."/>
            <person name="Vassarotti A."/>
            <person name="Vetter I."/>
            <person name="Vierendeels F."/>
            <person name="Vissers S."/>
            <person name="Wagner G."/>
            <person name="de Wergifosse P."/>
            <person name="Wolfe K.H."/>
            <person name="Zagulski M."/>
            <person name="Zimmermann F.K."/>
            <person name="Mewes H.-W."/>
            <person name="Kleine K."/>
        </authorList>
    </citation>
    <scope>NUCLEOTIDE SEQUENCE [LARGE SCALE GENOMIC DNA]</scope>
    <source>
        <strain>ATCC 204508 / S288c</strain>
    </source>
</reference>
<reference key="4">
    <citation type="journal article" date="2014" name="G3 (Bethesda)">
        <title>The reference genome sequence of Saccharomyces cerevisiae: Then and now.</title>
        <authorList>
            <person name="Engel S.R."/>
            <person name="Dietrich F.S."/>
            <person name="Fisk D.G."/>
            <person name="Binkley G."/>
            <person name="Balakrishnan R."/>
            <person name="Costanzo M.C."/>
            <person name="Dwight S.S."/>
            <person name="Hitz B.C."/>
            <person name="Karra K."/>
            <person name="Nash R.S."/>
            <person name="Weng S."/>
            <person name="Wong E.D."/>
            <person name="Lloyd P."/>
            <person name="Skrzypek M.S."/>
            <person name="Miyasato S.R."/>
            <person name="Simison M."/>
            <person name="Cherry J.M."/>
        </authorList>
    </citation>
    <scope>GENOME REANNOTATION</scope>
    <source>
        <strain>ATCC 204508 / S288c</strain>
    </source>
</reference>
<reference key="5">
    <citation type="journal article" date="2003" name="Nature">
        <title>Global analysis of protein expression in yeast.</title>
        <authorList>
            <person name="Ghaemmaghami S."/>
            <person name="Huh W.-K."/>
            <person name="Bower K."/>
            <person name="Howson R.W."/>
            <person name="Belle A."/>
            <person name="Dephoure N."/>
            <person name="O'Shea E.K."/>
            <person name="Weissman J.S."/>
        </authorList>
    </citation>
    <scope>LEVEL OF PROTEIN EXPRESSION [LARGE SCALE ANALYSIS]</scope>
</reference>
<reference key="6">
    <citation type="journal article" date="2008" name="Mol. Cell. Biol.">
        <title>Phosphorylation by casein kinase 2 regulates Nap1 localization and function.</title>
        <authorList>
            <person name="Calvert M.E.K."/>
            <person name="Keck K.M."/>
            <person name="Ptak C."/>
            <person name="Shabanowitz J."/>
            <person name="Hunt D.F."/>
            <person name="Pemberton L.F."/>
        </authorList>
    </citation>
    <scope>INTERACTION WITH NAP1</scope>
    <scope>IDENTIFICATION BY MASS SPECTROMETRY</scope>
</reference>
<dbReference type="EC" id="2.1.2.1"/>
<dbReference type="EMBL" id="L22528">
    <property type="protein sequence ID" value="AAA21024.1"/>
    <property type="molecule type" value="Genomic_DNA"/>
</dbReference>
<dbReference type="EMBL" id="X70529">
    <property type="protein sequence ID" value="CAA49927.1"/>
    <property type="status" value="ALT_INIT"/>
    <property type="molecule type" value="Genomic_DNA"/>
</dbReference>
<dbReference type="EMBL" id="Z36131">
    <property type="protein sequence ID" value="CAA85226.1"/>
    <property type="status" value="ALT_INIT"/>
    <property type="molecule type" value="Genomic_DNA"/>
</dbReference>
<dbReference type="EMBL" id="BK006936">
    <property type="protein sequence ID" value="DAA07380.1"/>
    <property type="molecule type" value="Genomic_DNA"/>
</dbReference>
<dbReference type="PIR" id="S29348">
    <property type="entry name" value="S29348"/>
</dbReference>
<dbReference type="RefSeq" id="NP_009822.4">
    <property type="nucleotide sequence ID" value="NM_001178611.3"/>
</dbReference>
<dbReference type="SMR" id="P37292"/>
<dbReference type="BioGRID" id="32958">
    <property type="interactions" value="224"/>
</dbReference>
<dbReference type="DIP" id="DIP-4952N"/>
<dbReference type="FunCoup" id="P37292">
    <property type="interactions" value="572"/>
</dbReference>
<dbReference type="IntAct" id="P37292">
    <property type="interactions" value="104"/>
</dbReference>
<dbReference type="MINT" id="P37292"/>
<dbReference type="STRING" id="4932.YBR263W"/>
<dbReference type="iPTMnet" id="P37292"/>
<dbReference type="PaxDb" id="4932-YBR263W"/>
<dbReference type="PeptideAtlas" id="P37292"/>
<dbReference type="EnsemblFungi" id="YBR263W_mRNA">
    <property type="protein sequence ID" value="YBR263W"/>
    <property type="gene ID" value="YBR263W"/>
</dbReference>
<dbReference type="GeneID" id="852565"/>
<dbReference type="KEGG" id="sce:YBR263W"/>
<dbReference type="AGR" id="SGD:S000000467"/>
<dbReference type="SGD" id="S000000467">
    <property type="gene designation" value="SHM1"/>
</dbReference>
<dbReference type="VEuPathDB" id="FungiDB:YBR263W"/>
<dbReference type="eggNOG" id="KOG2467">
    <property type="taxonomic scope" value="Eukaryota"/>
</dbReference>
<dbReference type="GeneTree" id="ENSGT00390000002762"/>
<dbReference type="HOGENOM" id="CLU_022477_0_1_1"/>
<dbReference type="InParanoid" id="P37292"/>
<dbReference type="OMA" id="TQPFFSQ"/>
<dbReference type="OrthoDB" id="10265628at2759"/>
<dbReference type="BioCyc" id="MetaCyc:YBR263W-MONOMER"/>
<dbReference type="BioCyc" id="YEAST:YBR263W-MONOMER"/>
<dbReference type="UniPathway" id="UPA00193"/>
<dbReference type="BioGRID-ORCS" id="852565">
    <property type="hits" value="6 hits in 10 CRISPR screens"/>
</dbReference>
<dbReference type="PRO" id="PR:P37292"/>
<dbReference type="Proteomes" id="UP000002311">
    <property type="component" value="Chromosome II"/>
</dbReference>
<dbReference type="RNAct" id="P37292">
    <property type="molecule type" value="protein"/>
</dbReference>
<dbReference type="GO" id="GO:0005737">
    <property type="term" value="C:cytoplasm"/>
    <property type="evidence" value="ECO:0000318"/>
    <property type="project" value="GO_Central"/>
</dbReference>
<dbReference type="GO" id="GO:0005739">
    <property type="term" value="C:mitochondrion"/>
    <property type="evidence" value="ECO:0000315"/>
    <property type="project" value="SGD"/>
</dbReference>
<dbReference type="GO" id="GO:0004372">
    <property type="term" value="F:glycine hydroxymethyltransferase activity"/>
    <property type="evidence" value="ECO:0000315"/>
    <property type="project" value="SGD"/>
</dbReference>
<dbReference type="GO" id="GO:0030170">
    <property type="term" value="F:pyridoxal phosphate binding"/>
    <property type="evidence" value="ECO:0000318"/>
    <property type="project" value="GO_Central"/>
</dbReference>
<dbReference type="GO" id="GO:0019264">
    <property type="term" value="P:glycine biosynthetic process from serine"/>
    <property type="evidence" value="ECO:0000318"/>
    <property type="project" value="GO_Central"/>
</dbReference>
<dbReference type="GO" id="GO:0006730">
    <property type="term" value="P:one-carbon metabolic process"/>
    <property type="evidence" value="ECO:0000315"/>
    <property type="project" value="SGD"/>
</dbReference>
<dbReference type="GO" id="GO:0035999">
    <property type="term" value="P:tetrahydrofolate interconversion"/>
    <property type="evidence" value="ECO:0007669"/>
    <property type="project" value="UniProtKB-UniPathway"/>
</dbReference>
<dbReference type="GO" id="GO:0046653">
    <property type="term" value="P:tetrahydrofolate metabolic process"/>
    <property type="evidence" value="ECO:0000318"/>
    <property type="project" value="GO_Central"/>
</dbReference>
<dbReference type="CDD" id="cd00378">
    <property type="entry name" value="SHMT"/>
    <property type="match status" value="1"/>
</dbReference>
<dbReference type="FunFam" id="3.40.640.10:FF:000097">
    <property type="entry name" value="Serine hydroxymethyltransferase"/>
    <property type="match status" value="1"/>
</dbReference>
<dbReference type="Gene3D" id="3.90.1150.10">
    <property type="entry name" value="Aspartate Aminotransferase, domain 1"/>
    <property type="match status" value="1"/>
</dbReference>
<dbReference type="Gene3D" id="3.40.640.10">
    <property type="entry name" value="Type I PLP-dependent aspartate aminotransferase-like (Major domain)"/>
    <property type="match status" value="1"/>
</dbReference>
<dbReference type="HAMAP" id="MF_00051">
    <property type="entry name" value="SHMT"/>
    <property type="match status" value="1"/>
</dbReference>
<dbReference type="InterPro" id="IPR015424">
    <property type="entry name" value="PyrdxlP-dep_Trfase"/>
</dbReference>
<dbReference type="InterPro" id="IPR015421">
    <property type="entry name" value="PyrdxlP-dep_Trfase_major"/>
</dbReference>
<dbReference type="InterPro" id="IPR015422">
    <property type="entry name" value="PyrdxlP-dep_Trfase_small"/>
</dbReference>
<dbReference type="InterPro" id="IPR001085">
    <property type="entry name" value="Ser_HO-MeTrfase"/>
</dbReference>
<dbReference type="InterPro" id="IPR049943">
    <property type="entry name" value="Ser_HO-MeTrfase-like"/>
</dbReference>
<dbReference type="InterPro" id="IPR019798">
    <property type="entry name" value="Ser_HO-MeTrfase_PLP_BS"/>
</dbReference>
<dbReference type="InterPro" id="IPR039429">
    <property type="entry name" value="SHMT-like_dom"/>
</dbReference>
<dbReference type="NCBIfam" id="NF000586">
    <property type="entry name" value="PRK00011.1"/>
    <property type="match status" value="1"/>
</dbReference>
<dbReference type="PANTHER" id="PTHR11680">
    <property type="entry name" value="SERINE HYDROXYMETHYLTRANSFERASE"/>
    <property type="match status" value="1"/>
</dbReference>
<dbReference type="PANTHER" id="PTHR11680:SF57">
    <property type="entry name" value="SERINE HYDROXYMETHYLTRANSFERASE, MITOCHONDRIAL"/>
    <property type="match status" value="1"/>
</dbReference>
<dbReference type="Pfam" id="PF00464">
    <property type="entry name" value="SHMT"/>
    <property type="match status" value="1"/>
</dbReference>
<dbReference type="PIRSF" id="PIRSF000412">
    <property type="entry name" value="SHMT"/>
    <property type="match status" value="1"/>
</dbReference>
<dbReference type="SUPFAM" id="SSF53383">
    <property type="entry name" value="PLP-dependent transferases"/>
    <property type="match status" value="1"/>
</dbReference>
<dbReference type="PROSITE" id="PS00096">
    <property type="entry name" value="SHMT"/>
    <property type="match status" value="1"/>
</dbReference>
<accession>P37292</accession>
<accession>D6VQR0</accession>
<evidence type="ECO:0000250" key="1"/>
<evidence type="ECO:0000255" key="2"/>
<evidence type="ECO:0000269" key="3">
    <source>
    </source>
</evidence>
<evidence type="ECO:0000269" key="4">
    <source>
    </source>
</evidence>
<evidence type="ECO:0000305" key="5"/>
<keyword id="KW-0496">Mitochondrion</keyword>
<keyword id="KW-0554">One-carbon metabolism</keyword>
<keyword id="KW-0663">Pyridoxal phosphate</keyword>
<keyword id="KW-1185">Reference proteome</keyword>
<keyword id="KW-0808">Transferase</keyword>
<keyword id="KW-0809">Transit peptide</keyword>
<comment type="function">
    <text>Interconversion of serine and glycine.</text>
</comment>
<comment type="catalytic activity">
    <reaction>
        <text>(6R)-5,10-methylene-5,6,7,8-tetrahydrofolate + glycine + H2O = (6S)-5,6,7,8-tetrahydrofolate + L-serine</text>
        <dbReference type="Rhea" id="RHEA:15481"/>
        <dbReference type="ChEBI" id="CHEBI:15377"/>
        <dbReference type="ChEBI" id="CHEBI:15636"/>
        <dbReference type="ChEBI" id="CHEBI:33384"/>
        <dbReference type="ChEBI" id="CHEBI:57305"/>
        <dbReference type="ChEBI" id="CHEBI:57453"/>
        <dbReference type="EC" id="2.1.2.1"/>
    </reaction>
</comment>
<comment type="cofactor">
    <cofactor>
        <name>pyridoxal 5'-phosphate</name>
        <dbReference type="ChEBI" id="CHEBI:597326"/>
    </cofactor>
</comment>
<comment type="pathway">
    <text>One-carbon metabolism; tetrahydrofolate interconversion.</text>
</comment>
<comment type="subunit">
    <text evidence="1 4">Homotetramer (By similarity). Interacts with NAP1.</text>
</comment>
<comment type="subcellular location">
    <subcellularLocation>
        <location>Mitochondrion</location>
    </subcellularLocation>
</comment>
<comment type="miscellaneous">
    <text>In eukaryotes there are two forms of the enzymes: a cytosolic one and a mitochondrial one.</text>
</comment>
<comment type="miscellaneous">
    <text evidence="3">Present with 17700 molecules/cell in log phase SD medium.</text>
</comment>
<comment type="similarity">
    <text evidence="5">Belongs to the SHMT family.</text>
</comment>
<comment type="sequence caution" evidence="5">
    <conflict type="erroneous initiation">
        <sequence resource="EMBL-CDS" id="CAA49927"/>
    </conflict>
</comment>
<comment type="sequence caution" evidence="5">
    <conflict type="erroneous initiation">
        <sequence resource="EMBL-CDS" id="CAA85226"/>
    </conflict>
</comment>
<feature type="transit peptide" description="Mitochondrion" evidence="2">
    <location>
        <begin position="1"/>
        <end position="20"/>
    </location>
</feature>
<feature type="chain" id="PRO_0000032568" description="Serine hydroxymethyltransferase, mitochondrial">
    <location>
        <begin position="21"/>
        <end position="490"/>
    </location>
</feature>
<feature type="modified residue" description="N6-(pyridoxal phosphate)lysine" evidence="1">
    <location>
        <position position="265"/>
    </location>
</feature>
<feature type="sequence conflict" description="In Ref. 1; AAA21024." evidence="5" ref="1">
    <original>L</original>
    <variation>S</variation>
    <location>
        <position position="72"/>
    </location>
</feature>
<name>GLYM_YEAST</name>
<gene>
    <name type="primary">SHM1</name>
    <name type="synonym">SHMT1</name>
    <name type="ordered locus">YBR263W</name>
    <name type="ORF">YBR1732</name>
</gene>